<keyword id="KW-0002">3D-structure</keyword>
<keyword id="KW-0903">Direct protein sequencing</keyword>
<keyword id="KW-0496">Mitochondrion</keyword>
<keyword id="KW-1185">Reference proteome</keyword>
<keyword id="KW-0687">Ribonucleoprotein</keyword>
<keyword id="KW-0689">Ribosomal protein</keyword>
<keyword id="KW-0809">Transit peptide</keyword>
<feature type="transit peptide" description="Mitochondrion" evidence="1">
    <location>
        <begin position="1"/>
        <end position="8"/>
    </location>
</feature>
<feature type="chain" id="PRO_0000238624" description="Large ribosomal subunit protein bL33m">
    <location>
        <begin position="9"/>
        <end position="65"/>
    </location>
</feature>
<evidence type="ECO:0000269" key="1">
    <source>
    </source>
</evidence>
<evidence type="ECO:0000269" key="2">
    <source>
    </source>
</evidence>
<evidence type="ECO:0000305" key="3"/>
<gene>
    <name type="primary">MRPL33</name>
</gene>
<comment type="subunit">
    <text evidence="1">Component of the mitochondrial ribosome large subunit (39S) which comprises a 16S rRNA and about 50 distinct proteins.</text>
</comment>
<comment type="subcellular location">
    <subcellularLocation>
        <location evidence="1 2">Mitochondrion</location>
    </subcellularLocation>
</comment>
<comment type="similarity">
    <text evidence="3">Belongs to the bacterial ribosomal protein bL33 family.</text>
</comment>
<accession>Q3SZ47</accession>
<proteinExistence type="evidence at protein level"/>
<sequence>MFLSAVTFAKSKSKTILVKMVSQAGTGFSFNTKRSRLWEKLTLLHYDPVVKKKVLFVEQKKIRSL</sequence>
<reference key="1">
    <citation type="submission" date="2005-08" db="EMBL/GenBank/DDBJ databases">
        <authorList>
            <consortium name="NIH - Mammalian Gene Collection (MGC) project"/>
        </authorList>
    </citation>
    <scope>NUCLEOTIDE SEQUENCE [LARGE SCALE MRNA]</scope>
    <source>
        <strain>Hereford</strain>
        <tissue>Heart ventricle</tissue>
    </source>
</reference>
<reference key="2">
    <citation type="journal article" date="2001" name="J. Biol. Chem.">
        <title>Structural compensation for the deficit of rRNA with proteins in the mammalian mitochondrial ribosome. Systematic analysis of protein components of the large ribosomal subunit from mammalian mitochondria.</title>
        <authorList>
            <person name="Suzuki T."/>
            <person name="Terasaki M."/>
            <person name="Takemoto-Hori C."/>
            <person name="Hanada T."/>
            <person name="Ueda T."/>
            <person name="Wada A."/>
            <person name="Watanabe K."/>
        </authorList>
    </citation>
    <scope>PROTEIN SEQUENCE OF 9-21</scope>
    <scope>IDENTIFICATION BY MASS SPECTROMETRY</scope>
    <scope>SUBCELLULAR LOCATION</scope>
    <scope>SUBUNIT</scope>
</reference>
<reference key="3">
    <citation type="journal article" date="2006" name="J. Mol. Biol.">
        <title>A structural model for the large subunit of the mammalian mitochondrial ribosome.</title>
        <authorList>
            <person name="Mears J.A."/>
            <person name="Sharma M.R."/>
            <person name="Gutell R.R."/>
            <person name="McCook A.S."/>
            <person name="Richardson P.E."/>
            <person name="Caulfield T.R."/>
            <person name="Agrawal R.K."/>
            <person name="Harvey S.C."/>
        </authorList>
    </citation>
    <scope>STRUCTURE BY ELECTRON MICROSCOPY (12 ANGSTROMS)</scope>
    <scope>SUBCELLULAR LOCATION</scope>
</reference>
<dbReference type="EMBL" id="BC103150">
    <property type="protein sequence ID" value="AAI03151.1"/>
    <property type="molecule type" value="mRNA"/>
</dbReference>
<dbReference type="RefSeq" id="NP_001106779.1">
    <property type="nucleotide sequence ID" value="NM_001113308.1"/>
</dbReference>
<dbReference type="RefSeq" id="XP_010820999.1">
    <property type="nucleotide sequence ID" value="XM_010822697.2"/>
</dbReference>
<dbReference type="PDB" id="2FTC">
    <property type="method" value="EM"/>
    <property type="chains" value="P=9-58"/>
</dbReference>
<dbReference type="PDBsum" id="2FTC"/>
<dbReference type="SMR" id="Q3SZ47"/>
<dbReference type="FunCoup" id="Q3SZ47">
    <property type="interactions" value="857"/>
</dbReference>
<dbReference type="STRING" id="9913.ENSBTAP00000056390"/>
<dbReference type="PaxDb" id="9913-ENSBTAP00000056390"/>
<dbReference type="Ensembl" id="ENSBTAT00000099541.1">
    <property type="protein sequence ID" value="ENSBTAP00000102341.1"/>
    <property type="gene ID" value="ENSBTAG00000066019.1"/>
</dbReference>
<dbReference type="GeneID" id="614711"/>
<dbReference type="KEGG" id="bta:101904449"/>
<dbReference type="KEGG" id="bta:614711"/>
<dbReference type="CTD" id="9553"/>
<dbReference type="VEuPathDB" id="HostDB:ENSBTAG00000032831"/>
<dbReference type="VEuPathDB" id="HostDB:ENSBTAG00000035199"/>
<dbReference type="VEuPathDB" id="HostDB:ENSBTAG00000055077"/>
<dbReference type="eggNOG" id="KOG3505">
    <property type="taxonomic scope" value="Eukaryota"/>
</dbReference>
<dbReference type="GeneTree" id="ENSGT00390000010130"/>
<dbReference type="HOGENOM" id="CLU_190949_1_2_1"/>
<dbReference type="InParanoid" id="Q3SZ47"/>
<dbReference type="OMA" id="TCFNVKR"/>
<dbReference type="OrthoDB" id="275534at2759"/>
<dbReference type="TreeFam" id="TF300279"/>
<dbReference type="Reactome" id="R-BTA-5389840">
    <property type="pathway name" value="Mitochondrial translation elongation"/>
</dbReference>
<dbReference type="Reactome" id="R-BTA-5419276">
    <property type="pathway name" value="Mitochondrial translation termination"/>
</dbReference>
<dbReference type="EvolutionaryTrace" id="Q3SZ47"/>
<dbReference type="Proteomes" id="UP000009136">
    <property type="component" value="Chromosome 14"/>
</dbReference>
<dbReference type="Bgee" id="ENSBTAG00000032831">
    <property type="expression patterns" value="Expressed in choroid plexus and 97 other cell types or tissues"/>
</dbReference>
<dbReference type="GO" id="GO:0005743">
    <property type="term" value="C:mitochondrial inner membrane"/>
    <property type="evidence" value="ECO:0000304"/>
    <property type="project" value="Reactome"/>
</dbReference>
<dbReference type="GO" id="GO:0005762">
    <property type="term" value="C:mitochondrial large ribosomal subunit"/>
    <property type="evidence" value="ECO:0000250"/>
    <property type="project" value="UniProtKB"/>
</dbReference>
<dbReference type="GO" id="GO:0005739">
    <property type="term" value="C:mitochondrion"/>
    <property type="evidence" value="ECO:0000318"/>
    <property type="project" value="GO_Central"/>
</dbReference>
<dbReference type="GO" id="GO:0003735">
    <property type="term" value="F:structural constituent of ribosome"/>
    <property type="evidence" value="ECO:0007669"/>
    <property type="project" value="InterPro"/>
</dbReference>
<dbReference type="GO" id="GO:0006412">
    <property type="term" value="P:translation"/>
    <property type="evidence" value="ECO:0007669"/>
    <property type="project" value="InterPro"/>
</dbReference>
<dbReference type="FunFam" id="2.20.28.120:FF:000005">
    <property type="entry name" value="39S ribosomal protein L33, mitochondrial"/>
    <property type="match status" value="1"/>
</dbReference>
<dbReference type="Gene3D" id="2.20.28.120">
    <property type="entry name" value="Ribosomal protein L33"/>
    <property type="match status" value="1"/>
</dbReference>
<dbReference type="InterPro" id="IPR052008">
    <property type="entry name" value="Mitoribosomal_protein_bL33"/>
</dbReference>
<dbReference type="InterPro" id="IPR001705">
    <property type="entry name" value="Ribosomal_bL33"/>
</dbReference>
<dbReference type="InterPro" id="IPR038584">
    <property type="entry name" value="Ribosomal_bL33_sf"/>
</dbReference>
<dbReference type="InterPro" id="IPR011332">
    <property type="entry name" value="Ribosomal_zn-bd"/>
</dbReference>
<dbReference type="NCBIfam" id="TIGR01023">
    <property type="entry name" value="rpmG_bact"/>
    <property type="match status" value="1"/>
</dbReference>
<dbReference type="PANTHER" id="PTHR47037">
    <property type="entry name" value="39S RIBOSOMAL PROTEIN L33, MITOCHONDRIAL"/>
    <property type="match status" value="1"/>
</dbReference>
<dbReference type="PANTHER" id="PTHR47037:SF2">
    <property type="entry name" value="LARGE RIBOSOMAL SUBUNIT PROTEIN BL33M"/>
    <property type="match status" value="1"/>
</dbReference>
<dbReference type="Pfam" id="PF00471">
    <property type="entry name" value="Ribosomal_L33"/>
    <property type="match status" value="1"/>
</dbReference>
<dbReference type="SUPFAM" id="SSF57829">
    <property type="entry name" value="Zn-binding ribosomal proteins"/>
    <property type="match status" value="1"/>
</dbReference>
<protein>
    <recommendedName>
        <fullName evidence="3">Large ribosomal subunit protein bL33m</fullName>
    </recommendedName>
    <alternativeName>
        <fullName>39S ribosomal protein L33, mitochondrial</fullName>
        <shortName>L33mt</shortName>
        <shortName>MRP-L33</shortName>
    </alternativeName>
</protein>
<organism>
    <name type="scientific">Bos taurus</name>
    <name type="common">Bovine</name>
    <dbReference type="NCBI Taxonomy" id="9913"/>
    <lineage>
        <taxon>Eukaryota</taxon>
        <taxon>Metazoa</taxon>
        <taxon>Chordata</taxon>
        <taxon>Craniata</taxon>
        <taxon>Vertebrata</taxon>
        <taxon>Euteleostomi</taxon>
        <taxon>Mammalia</taxon>
        <taxon>Eutheria</taxon>
        <taxon>Laurasiatheria</taxon>
        <taxon>Artiodactyla</taxon>
        <taxon>Ruminantia</taxon>
        <taxon>Pecora</taxon>
        <taxon>Bovidae</taxon>
        <taxon>Bovinae</taxon>
        <taxon>Bos</taxon>
    </lineage>
</organism>
<name>RM33_BOVIN</name>